<organism>
    <name type="scientific">Methanosarcina thermophila</name>
    <dbReference type="NCBI Taxonomy" id="2210"/>
    <lineage>
        <taxon>Archaea</taxon>
        <taxon>Methanobacteriati</taxon>
        <taxon>Methanobacteriota</taxon>
        <taxon>Stenosarchaea group</taxon>
        <taxon>Methanomicrobia</taxon>
        <taxon>Methanosarcinales</taxon>
        <taxon>Methanosarcinaceae</taxon>
        <taxon>Methanosarcina</taxon>
    </lineage>
</organism>
<sequence>AYERQFYPGATSVAENNIGH</sequence>
<proteinExistence type="evidence at protein level"/>
<evidence type="ECO:0000256" key="1">
    <source>
        <dbReference type="SAM" id="MobiDB-lite"/>
    </source>
</evidence>
<evidence type="ECO:0000269" key="2">
    <source>
    </source>
</evidence>
<evidence type="ECO:0000305" key="3"/>
<evidence type="ECO:0000305" key="4">
    <source>
    </source>
</evidence>
<name>MCRG_METTE</name>
<keyword id="KW-0963">Cytoplasm</keyword>
<keyword id="KW-0903">Direct protein sequencing</keyword>
<keyword id="KW-0484">Methanogenesis</keyword>
<keyword id="KW-0808">Transferase</keyword>
<accession>P22950</accession>
<comment type="function">
    <text evidence="2">Component of the methyl-coenzyme M reductase (MCR) I that catalyzes the reductive cleavage of methyl-coenzyme M (CoM-S-CH3 or 2-(methylthio)ethanesulfonate) using coenzyme B (CoB or 7-mercaptoheptanoylthreonine phosphate) as reductant which results in the production of methane and the mixed heterodisulfide of CoB and CoM (CoM-S-S-CoB). This is the final step in methanogenesis.</text>
</comment>
<comment type="catalytic activity">
    <reaction evidence="2">
        <text>coenzyme B + methyl-coenzyme M = methane + coenzyme M-coenzyme B heterodisulfide</text>
        <dbReference type="Rhea" id="RHEA:12532"/>
        <dbReference type="ChEBI" id="CHEBI:16183"/>
        <dbReference type="ChEBI" id="CHEBI:58286"/>
        <dbReference type="ChEBI" id="CHEBI:58411"/>
        <dbReference type="ChEBI" id="CHEBI:58596"/>
        <dbReference type="EC" id="2.8.4.1"/>
    </reaction>
    <physiologicalReaction direction="left-to-right" evidence="4">
        <dbReference type="Rhea" id="RHEA:12533"/>
    </physiologicalReaction>
</comment>
<comment type="cofactor">
    <cofactor evidence="2">
        <name>coenzyme F430</name>
        <dbReference type="ChEBI" id="CHEBI:60540"/>
    </cofactor>
    <text evidence="2">Binds 1 coenzyme F430 non-covalently per MCR heterotrimeric complex. Coenzyme F430 is a yellow nickel porphinoid. Methyl-coenzyme-M reductase is activated when the enzyme-bound coenzyme F430 is reduced, probably to the Ni(I) oxidation state.</text>
</comment>
<comment type="biophysicochemical properties">
    <phDependence>
        <text evidence="2">Optimum pH is 7.0.</text>
    </phDependence>
    <temperatureDependence>
        <text evidence="2">Optimum temperature is 60 degrees Celsius.</text>
    </temperatureDependence>
</comment>
<comment type="pathway">
    <text evidence="4">One-carbon metabolism; methyl-coenzyme M reduction; methane from methyl-coenzyme M: step 1/1.</text>
</comment>
<comment type="subunit">
    <text evidence="2">MCR from M.thermophila is a heterotrimer composed of an alpha, a beta, and a gamma subunit.</text>
</comment>
<comment type="subcellular location">
    <subcellularLocation>
        <location evidence="4">Cytoplasm</location>
    </subcellularLocation>
</comment>
<comment type="similarity">
    <text evidence="3">Belongs to the methyl-coenzyme M reductase gamma subunit family.</text>
</comment>
<protein>
    <recommendedName>
        <fullName>Methyl-coenzyme M reductase subunit gamma</fullName>
        <ecNumber evidence="2">2.8.4.1</ecNumber>
    </recommendedName>
    <alternativeName>
        <fullName>Coenzyme-B sulfoethylthiotransferase gamma</fullName>
    </alternativeName>
</protein>
<reference key="1">
    <citation type="journal article" date="1991" name="J. Bacteriol.">
        <title>Purification and properties of methyl coenzyme M methylreductase from acetate-grown Methanosarcina thermophila.</title>
        <authorList>
            <person name="Jablonski P.E."/>
            <person name="Ferry J.G."/>
        </authorList>
    </citation>
    <scope>PROTEIN SEQUENCE</scope>
    <scope>FUNCTION</scope>
    <scope>CATALYTIC ACTIVITY</scope>
    <scope>COFACTOR</scope>
    <scope>BIOPHYSICOCHEMICAL PROPERTIES</scope>
    <scope>SUBUNIT</scope>
    <scope>SUBCELLULAR LOCATION</scope>
    <source>
        <strain>ATCC 43570 / DSM 1825 / OCM 12 / TM-1</strain>
    </source>
</reference>
<dbReference type="EC" id="2.8.4.1" evidence="2"/>
<dbReference type="UniPathway" id="UPA00646">
    <property type="reaction ID" value="UER00699"/>
</dbReference>
<dbReference type="GO" id="GO:0005737">
    <property type="term" value="C:cytoplasm"/>
    <property type="evidence" value="ECO:0007669"/>
    <property type="project" value="UniProtKB-SubCell"/>
</dbReference>
<dbReference type="GO" id="GO:0050524">
    <property type="term" value="F:coenzyme-B sulfoethylthiotransferase activity"/>
    <property type="evidence" value="ECO:0007669"/>
    <property type="project" value="UniProtKB-EC"/>
</dbReference>
<dbReference type="GO" id="GO:0015948">
    <property type="term" value="P:methanogenesis"/>
    <property type="evidence" value="ECO:0007669"/>
    <property type="project" value="UniProtKB-KW"/>
</dbReference>
<feature type="chain" id="PRO_0000147482" description="Methyl-coenzyme M reductase subunit gamma">
    <location>
        <begin position="1"/>
        <end position="20" status="greater than"/>
    </location>
</feature>
<feature type="region of interest" description="Disordered" evidence="1">
    <location>
        <begin position="1"/>
        <end position="20"/>
    </location>
</feature>
<feature type="non-terminal residue">
    <location>
        <position position="20"/>
    </location>
</feature>